<gene>
    <name type="ORF">Ga0059260_01848</name>
    <name evidence="3" type="ORF">KV36_09040.1</name>
</gene>
<evidence type="ECO:0000269" key="1">
    <source>
    </source>
</evidence>
<evidence type="ECO:0000303" key="2">
    <source>
    </source>
</evidence>
<evidence type="ECO:0000303" key="3">
    <source ref="1"/>
</evidence>
<evidence type="ECO:0000305" key="4"/>
<evidence type="ECO:0000312" key="5">
    <source>
        <dbReference type="EMBL" id="JRBD01000006"/>
    </source>
</evidence>
<reference evidence="5" key="1">
    <citation type="submission" date="2014-09" db="EMBL/GenBank/DDBJ databases">
        <title>Vibrio cholerae O1 biovar El Tor MAK676 whole genome shotgun sequence.</title>
        <authorList>
            <person name="Kritzky A."/>
            <person name="Cheldyshova N.B."/>
            <person name="Kulshan T.A."/>
            <person name="Krasnov Y.M."/>
            <person name="Cherkasov A.V."/>
            <person name="Smirnova N.I."/>
        </authorList>
    </citation>
    <scope>NUCLEOTIDE SEQUENCE [LARGE SCALE GENOMIC DNA]</scope>
    <source>
        <strain>MAK676</strain>
    </source>
</reference>
<reference key="2">
    <citation type="journal article" date="1999" name="Mol. Microbiol.">
        <title>A retroelement in Vibrio cholerae.</title>
        <authorList>
            <person name="Shimamoto T."/>
            <person name="Kobayashi M."/>
            <person name="Tsuchiya T."/>
            <person name="Shinoda S."/>
            <person name="Kawakami H."/>
            <person name="Inouye S."/>
            <person name="Inouye M."/>
        </authorList>
    </citation>
    <scope>IDENTIFICATION</scope>
    <source>
        <strain>O139</strain>
    </source>
</reference>
<reference key="3">
    <citation type="journal article" date="2020" name="Cell">
        <title>Bacterial Retrons Function In Anti-Phage Defense.</title>
        <authorList>
            <person name="Millman A."/>
            <person name="Bernheim A."/>
            <person name="Stokar-Avihail A."/>
            <person name="Fedorenko T."/>
            <person name="Voichek M."/>
            <person name="Leavitt A."/>
            <person name="Oppenheimer-Shaanan Y."/>
            <person name="Sorek R."/>
        </authorList>
    </citation>
    <scope>FUNCTION IN ANTIVIRAL DEFENSE</scope>
    <scope>IDENTIFICATION AS A RETRON</scope>
    <source>
        <strain>MAK676</strain>
    </source>
</reference>
<comment type="function">
    <text evidence="1">Probable ATPase component of antiviral defense system retron Vc95, composed of a non-coding RNA (ncRNA), a reverse transcriptase (RT), this protein and a putative HNH endonuclease. Expression of retron Vc95 confers protection against bacteriophages T2, T4 and T6. At multiplicity of infection (MOI) of 0.02 cultures slow growth when infected with T4 but do not collapse, at MOI 2 cultures enter growth stasis.</text>
</comment>
<sequence length="514" mass="59688">MNEPTRIPKYVKDKIRQAKQGDLYSSFTVSEYYYDGEVLERDIEQSELYLRNVSRIINNAKIRLRNISLYDYKKFSKLKFTSSEKNTTIIIGNNGSGKSTILESISKCLQFLSDNIRIQNNNNYKFQDSEINIHSISGQTIVRCILEIENDFSFSCSLTKNRENISRKVSSELEEFKALARMYQRSNELDNNTLSYPLLAYYPVERSVTLKRDDAVKYYERKKAKYSDKSEGLKNAFDGTSNFNDFFSWYKEIDDIINEFKANDSITKEEIEYLLSKTDNKEKIGSLISQLLEKKNNYNNNEDREFLIRQQKVIQESIKTFVSDIDQVKISRTPHLDMTVIKNGSEISIFNLSQGEKTLIALVSDIARRLVILNPSLENPLNGYGIVLIDEIDLHLHPKWQQTIVQKLENTFPNIQFILSTHSPLVLTTVTSEQIKIINELDYRFKLLSPTSNPFGKNASDALAIMETSESPLVHSEEILALIKKYESLVKRGQEDCRKTKEIKKTHRKHWIYI</sequence>
<proteinExistence type="evidence at protein level"/>
<name>ATP95_VIBCE</name>
<feature type="chain" id="PRO_0000456026" description="Retron Vc95 probable ATPase">
    <location>
        <begin position="1"/>
        <end position="514"/>
    </location>
</feature>
<feature type="short sequence motif" description="ATP-binding" evidence="4">
    <location>
        <begin position="92"/>
        <end position="99"/>
    </location>
</feature>
<protein>
    <recommendedName>
        <fullName evidence="2">Retron Vc95 probable ATPase</fullName>
        <shortName evidence="2">ORF540</shortName>
    </recommendedName>
</protein>
<dbReference type="EMBL" id="JRBD01000006">
    <property type="status" value="NOT_ANNOTATED_CDS"/>
    <property type="molecule type" value="Genomic_DNA"/>
</dbReference>
<dbReference type="GO" id="GO:0005524">
    <property type="term" value="F:ATP binding"/>
    <property type="evidence" value="ECO:0007669"/>
    <property type="project" value="UniProtKB-KW"/>
</dbReference>
<dbReference type="GO" id="GO:0016887">
    <property type="term" value="F:ATP hydrolysis activity"/>
    <property type="evidence" value="ECO:0007669"/>
    <property type="project" value="InterPro"/>
</dbReference>
<dbReference type="GO" id="GO:0051607">
    <property type="term" value="P:defense response to virus"/>
    <property type="evidence" value="ECO:0007669"/>
    <property type="project" value="UniProtKB-KW"/>
</dbReference>
<dbReference type="GO" id="GO:0000731">
    <property type="term" value="P:DNA synthesis involved in DNA repair"/>
    <property type="evidence" value="ECO:0007669"/>
    <property type="project" value="TreeGrafter"/>
</dbReference>
<dbReference type="GO" id="GO:0006302">
    <property type="term" value="P:double-strand break repair"/>
    <property type="evidence" value="ECO:0007669"/>
    <property type="project" value="TreeGrafter"/>
</dbReference>
<dbReference type="CDD" id="cd00267">
    <property type="entry name" value="ABC_ATPase"/>
    <property type="match status" value="1"/>
</dbReference>
<dbReference type="Gene3D" id="3.40.50.300">
    <property type="entry name" value="P-loop containing nucleotide triphosphate hydrolases"/>
    <property type="match status" value="1"/>
</dbReference>
<dbReference type="InterPro" id="IPR003593">
    <property type="entry name" value="AAA+_ATPase"/>
</dbReference>
<dbReference type="InterPro" id="IPR003959">
    <property type="entry name" value="ATPase_AAA_core"/>
</dbReference>
<dbReference type="InterPro" id="IPR027417">
    <property type="entry name" value="P-loop_NTPase"/>
</dbReference>
<dbReference type="PANTHER" id="PTHR32182:SF23">
    <property type="entry name" value="ATP BINDING PROTEIN"/>
    <property type="match status" value="1"/>
</dbReference>
<dbReference type="PANTHER" id="PTHR32182">
    <property type="entry name" value="DNA REPLICATION AND REPAIR PROTEIN RECF"/>
    <property type="match status" value="1"/>
</dbReference>
<dbReference type="Pfam" id="PF13304">
    <property type="entry name" value="AAA_21"/>
    <property type="match status" value="1"/>
</dbReference>
<dbReference type="SMART" id="SM00382">
    <property type="entry name" value="AAA"/>
    <property type="match status" value="1"/>
</dbReference>
<dbReference type="SUPFAM" id="SSF52540">
    <property type="entry name" value="P-loop containing nucleoside triphosphate hydrolases"/>
    <property type="match status" value="1"/>
</dbReference>
<accession>P0DV98</accession>
<keyword id="KW-0051">Antiviral defense</keyword>
<keyword id="KW-0067">ATP-binding</keyword>
<keyword id="KW-0547">Nucleotide-binding</keyword>
<organism>
    <name type="scientific">Vibrio cholerae serotype O1 biovar El Tor</name>
    <dbReference type="NCBI Taxonomy" id="686"/>
    <lineage>
        <taxon>Bacteria</taxon>
        <taxon>Pseudomonadati</taxon>
        <taxon>Pseudomonadota</taxon>
        <taxon>Gammaproteobacteria</taxon>
        <taxon>Vibrionales</taxon>
        <taxon>Vibrionaceae</taxon>
        <taxon>Vibrio</taxon>
    </lineage>
</organism>